<sequence>MARVTVEDCLDHVDNRFELVLVASKRARQLARQGMEPTVEWDNDKPTVVALREIAVGHVTKEILKQREQDYQTSSLDLALSTNSLNLEGFSF</sequence>
<proteinExistence type="inferred from homology"/>
<protein>
    <recommendedName>
        <fullName evidence="1">DNA-directed RNA polymerase subunit omega</fullName>
        <shortName evidence="1">RNAP omega subunit</shortName>
        <ecNumber evidence="1">2.7.7.6</ecNumber>
    </recommendedName>
    <alternativeName>
        <fullName evidence="1">RNA polymerase omega subunit</fullName>
    </alternativeName>
    <alternativeName>
        <fullName evidence="1">Transcriptase subunit omega</fullName>
    </alternativeName>
</protein>
<keyword id="KW-0240">DNA-directed RNA polymerase</keyword>
<keyword id="KW-0548">Nucleotidyltransferase</keyword>
<keyword id="KW-0804">Transcription</keyword>
<keyword id="KW-0808">Transferase</keyword>
<reference key="1">
    <citation type="journal article" date="2008" name="Antimicrob. Agents Chemother.">
        <title>Whole-genome pyrosequencing of an epidemic multidrug-resistant Acinetobacter baumannii strain belonging to the European clone II group.</title>
        <authorList>
            <person name="Iacono M."/>
            <person name="Villa L."/>
            <person name="Fortini D."/>
            <person name="Bordoni R."/>
            <person name="Imperi F."/>
            <person name="Bonnal R.J."/>
            <person name="Sicheritz-Ponten T."/>
            <person name="De Bellis G."/>
            <person name="Visca P."/>
            <person name="Cassone A."/>
            <person name="Carattoli A."/>
        </authorList>
    </citation>
    <scope>NUCLEOTIDE SEQUENCE [LARGE SCALE GENOMIC DNA]</scope>
    <source>
        <strain>ACICU</strain>
    </source>
</reference>
<accession>B2HZW5</accession>
<organism>
    <name type="scientific">Acinetobacter baumannii (strain ACICU)</name>
    <dbReference type="NCBI Taxonomy" id="405416"/>
    <lineage>
        <taxon>Bacteria</taxon>
        <taxon>Pseudomonadati</taxon>
        <taxon>Pseudomonadota</taxon>
        <taxon>Gammaproteobacteria</taxon>
        <taxon>Moraxellales</taxon>
        <taxon>Moraxellaceae</taxon>
        <taxon>Acinetobacter</taxon>
        <taxon>Acinetobacter calcoaceticus/baumannii complex</taxon>
    </lineage>
</organism>
<name>RPOZ_ACIBC</name>
<evidence type="ECO:0000255" key="1">
    <source>
        <dbReference type="HAMAP-Rule" id="MF_00366"/>
    </source>
</evidence>
<dbReference type="EC" id="2.7.7.6" evidence="1"/>
<dbReference type="EMBL" id="CP000863">
    <property type="protein sequence ID" value="ACC58683.1"/>
    <property type="molecule type" value="Genomic_DNA"/>
</dbReference>
<dbReference type="RefSeq" id="WP_000135049.1">
    <property type="nucleotide sequence ID" value="NZ_CP031380.1"/>
</dbReference>
<dbReference type="SMR" id="B2HZW5"/>
<dbReference type="GeneID" id="92895409"/>
<dbReference type="KEGG" id="abc:ACICU_03373"/>
<dbReference type="HOGENOM" id="CLU_125406_5_3_6"/>
<dbReference type="Proteomes" id="UP000008839">
    <property type="component" value="Chromosome"/>
</dbReference>
<dbReference type="GO" id="GO:0000428">
    <property type="term" value="C:DNA-directed RNA polymerase complex"/>
    <property type="evidence" value="ECO:0007669"/>
    <property type="project" value="UniProtKB-KW"/>
</dbReference>
<dbReference type="GO" id="GO:0003677">
    <property type="term" value="F:DNA binding"/>
    <property type="evidence" value="ECO:0007669"/>
    <property type="project" value="UniProtKB-UniRule"/>
</dbReference>
<dbReference type="GO" id="GO:0003899">
    <property type="term" value="F:DNA-directed RNA polymerase activity"/>
    <property type="evidence" value="ECO:0007669"/>
    <property type="project" value="UniProtKB-UniRule"/>
</dbReference>
<dbReference type="GO" id="GO:0006351">
    <property type="term" value="P:DNA-templated transcription"/>
    <property type="evidence" value="ECO:0007669"/>
    <property type="project" value="UniProtKB-UniRule"/>
</dbReference>
<dbReference type="Gene3D" id="3.90.940.10">
    <property type="match status" value="1"/>
</dbReference>
<dbReference type="HAMAP" id="MF_00366">
    <property type="entry name" value="RNApol_bact_RpoZ"/>
    <property type="match status" value="1"/>
</dbReference>
<dbReference type="InterPro" id="IPR003716">
    <property type="entry name" value="DNA-dir_RNA_pol_omega"/>
</dbReference>
<dbReference type="InterPro" id="IPR006110">
    <property type="entry name" value="Pol_omega/Rpo6/RPB6"/>
</dbReference>
<dbReference type="InterPro" id="IPR036161">
    <property type="entry name" value="RPB6/omega-like_sf"/>
</dbReference>
<dbReference type="NCBIfam" id="TIGR00690">
    <property type="entry name" value="rpoZ"/>
    <property type="match status" value="1"/>
</dbReference>
<dbReference type="PANTHER" id="PTHR34476">
    <property type="entry name" value="DNA-DIRECTED RNA POLYMERASE SUBUNIT OMEGA"/>
    <property type="match status" value="1"/>
</dbReference>
<dbReference type="PANTHER" id="PTHR34476:SF1">
    <property type="entry name" value="DNA-DIRECTED RNA POLYMERASE SUBUNIT OMEGA"/>
    <property type="match status" value="1"/>
</dbReference>
<dbReference type="Pfam" id="PF01192">
    <property type="entry name" value="RNA_pol_Rpb6"/>
    <property type="match status" value="1"/>
</dbReference>
<dbReference type="SMART" id="SM01409">
    <property type="entry name" value="RNA_pol_Rpb6"/>
    <property type="match status" value="1"/>
</dbReference>
<dbReference type="SUPFAM" id="SSF63562">
    <property type="entry name" value="RPB6/omega subunit-like"/>
    <property type="match status" value="1"/>
</dbReference>
<feature type="chain" id="PRO_1000121176" description="DNA-directed RNA polymerase subunit omega">
    <location>
        <begin position="1"/>
        <end position="92"/>
    </location>
</feature>
<comment type="function">
    <text evidence="1">Promotes RNA polymerase assembly. Latches the N- and C-terminal regions of the beta' subunit thereby facilitating its interaction with the beta and alpha subunits.</text>
</comment>
<comment type="catalytic activity">
    <reaction evidence="1">
        <text>RNA(n) + a ribonucleoside 5'-triphosphate = RNA(n+1) + diphosphate</text>
        <dbReference type="Rhea" id="RHEA:21248"/>
        <dbReference type="Rhea" id="RHEA-COMP:14527"/>
        <dbReference type="Rhea" id="RHEA-COMP:17342"/>
        <dbReference type="ChEBI" id="CHEBI:33019"/>
        <dbReference type="ChEBI" id="CHEBI:61557"/>
        <dbReference type="ChEBI" id="CHEBI:140395"/>
        <dbReference type="EC" id="2.7.7.6"/>
    </reaction>
</comment>
<comment type="subunit">
    <text evidence="1">The RNAP catalytic core consists of 2 alpha, 1 beta, 1 beta' and 1 omega subunit. When a sigma factor is associated with the core the holoenzyme is formed, which can initiate transcription.</text>
</comment>
<comment type="similarity">
    <text evidence="1">Belongs to the RNA polymerase subunit omega family.</text>
</comment>
<gene>
    <name evidence="1" type="primary">rpoZ</name>
    <name type="ordered locus">ACICU_03373</name>
</gene>